<feature type="chain" id="PRO_1000005926" description="DNA-directed RNA polymerase subunit omega">
    <location>
        <begin position="1"/>
        <end position="114"/>
    </location>
</feature>
<sequence>MARVTVEDCVDKVPNRFDLVLLAAQRAREISGGAEMTIDRDRDKNPVVALREIAEQTIKPKDLQEAVVTNLQKILPDDDDEFDEVGSLSQSAEALRITASAPTRSTSIGADFDG</sequence>
<accession>Q2N7Q3</accession>
<comment type="function">
    <text evidence="1">Promotes RNA polymerase assembly. Latches the N- and C-terminal regions of the beta' subunit thereby facilitating its interaction with the beta and alpha subunits.</text>
</comment>
<comment type="catalytic activity">
    <reaction evidence="1">
        <text>RNA(n) + a ribonucleoside 5'-triphosphate = RNA(n+1) + diphosphate</text>
        <dbReference type="Rhea" id="RHEA:21248"/>
        <dbReference type="Rhea" id="RHEA-COMP:14527"/>
        <dbReference type="Rhea" id="RHEA-COMP:17342"/>
        <dbReference type="ChEBI" id="CHEBI:33019"/>
        <dbReference type="ChEBI" id="CHEBI:61557"/>
        <dbReference type="ChEBI" id="CHEBI:140395"/>
        <dbReference type="EC" id="2.7.7.6"/>
    </reaction>
</comment>
<comment type="subunit">
    <text evidence="1">The RNAP catalytic core consists of 2 alpha, 1 beta, 1 beta' and 1 omega subunit. When a sigma factor is associated with the core the holoenzyme is formed, which can initiate transcription.</text>
</comment>
<comment type="similarity">
    <text evidence="1">Belongs to the RNA polymerase subunit omega family.</text>
</comment>
<proteinExistence type="inferred from homology"/>
<keyword id="KW-0240">DNA-directed RNA polymerase</keyword>
<keyword id="KW-0548">Nucleotidyltransferase</keyword>
<keyword id="KW-1185">Reference proteome</keyword>
<keyword id="KW-0804">Transcription</keyword>
<keyword id="KW-0808">Transferase</keyword>
<organism>
    <name type="scientific">Erythrobacter litoralis (strain HTCC2594)</name>
    <dbReference type="NCBI Taxonomy" id="314225"/>
    <lineage>
        <taxon>Bacteria</taxon>
        <taxon>Pseudomonadati</taxon>
        <taxon>Pseudomonadota</taxon>
        <taxon>Alphaproteobacteria</taxon>
        <taxon>Sphingomonadales</taxon>
        <taxon>Erythrobacteraceae</taxon>
        <taxon>Erythrobacter/Porphyrobacter group</taxon>
        <taxon>Erythrobacter</taxon>
    </lineage>
</organism>
<gene>
    <name evidence="1" type="primary">rpoZ</name>
    <name type="ordered locus">ELI_10980</name>
</gene>
<name>RPOZ_ERYLH</name>
<dbReference type="EC" id="2.7.7.6" evidence="1"/>
<dbReference type="EMBL" id="CP000157">
    <property type="protein sequence ID" value="ABC64288.1"/>
    <property type="molecule type" value="Genomic_DNA"/>
</dbReference>
<dbReference type="RefSeq" id="WP_011415111.1">
    <property type="nucleotide sequence ID" value="NC_007722.1"/>
</dbReference>
<dbReference type="SMR" id="Q2N7Q3"/>
<dbReference type="STRING" id="314225.ELI_10980"/>
<dbReference type="KEGG" id="eli:ELI_10980"/>
<dbReference type="eggNOG" id="COG1758">
    <property type="taxonomic scope" value="Bacteria"/>
</dbReference>
<dbReference type="HOGENOM" id="CLU_125406_2_0_5"/>
<dbReference type="OrthoDB" id="9796300at2"/>
<dbReference type="Proteomes" id="UP000008808">
    <property type="component" value="Chromosome"/>
</dbReference>
<dbReference type="GO" id="GO:0000428">
    <property type="term" value="C:DNA-directed RNA polymerase complex"/>
    <property type="evidence" value="ECO:0007669"/>
    <property type="project" value="UniProtKB-KW"/>
</dbReference>
<dbReference type="GO" id="GO:0003677">
    <property type="term" value="F:DNA binding"/>
    <property type="evidence" value="ECO:0007669"/>
    <property type="project" value="UniProtKB-UniRule"/>
</dbReference>
<dbReference type="GO" id="GO:0003899">
    <property type="term" value="F:DNA-directed RNA polymerase activity"/>
    <property type="evidence" value="ECO:0007669"/>
    <property type="project" value="UniProtKB-UniRule"/>
</dbReference>
<dbReference type="GO" id="GO:0006351">
    <property type="term" value="P:DNA-templated transcription"/>
    <property type="evidence" value="ECO:0007669"/>
    <property type="project" value="UniProtKB-UniRule"/>
</dbReference>
<dbReference type="Gene3D" id="3.90.940.10">
    <property type="match status" value="1"/>
</dbReference>
<dbReference type="HAMAP" id="MF_00366">
    <property type="entry name" value="RNApol_bact_RpoZ"/>
    <property type="match status" value="1"/>
</dbReference>
<dbReference type="InterPro" id="IPR003716">
    <property type="entry name" value="DNA-dir_RNA_pol_omega"/>
</dbReference>
<dbReference type="InterPro" id="IPR006110">
    <property type="entry name" value="Pol_omega/Rpo6/RPB6"/>
</dbReference>
<dbReference type="InterPro" id="IPR036161">
    <property type="entry name" value="RPB6/omega-like_sf"/>
</dbReference>
<dbReference type="NCBIfam" id="TIGR00690">
    <property type="entry name" value="rpoZ"/>
    <property type="match status" value="1"/>
</dbReference>
<dbReference type="PANTHER" id="PTHR34476">
    <property type="entry name" value="DNA-DIRECTED RNA POLYMERASE SUBUNIT OMEGA"/>
    <property type="match status" value="1"/>
</dbReference>
<dbReference type="PANTHER" id="PTHR34476:SF1">
    <property type="entry name" value="DNA-DIRECTED RNA POLYMERASE SUBUNIT OMEGA"/>
    <property type="match status" value="1"/>
</dbReference>
<dbReference type="Pfam" id="PF01192">
    <property type="entry name" value="RNA_pol_Rpb6"/>
    <property type="match status" value="1"/>
</dbReference>
<dbReference type="SMART" id="SM01409">
    <property type="entry name" value="RNA_pol_Rpb6"/>
    <property type="match status" value="1"/>
</dbReference>
<dbReference type="SUPFAM" id="SSF63562">
    <property type="entry name" value="RPB6/omega subunit-like"/>
    <property type="match status" value="1"/>
</dbReference>
<evidence type="ECO:0000255" key="1">
    <source>
        <dbReference type="HAMAP-Rule" id="MF_00366"/>
    </source>
</evidence>
<reference key="1">
    <citation type="journal article" date="2009" name="J. Bacteriol.">
        <title>Complete genome sequence of Erythrobacter litoralis HTCC2594.</title>
        <authorList>
            <person name="Oh H.M."/>
            <person name="Giovannoni S.J."/>
            <person name="Ferriera S."/>
            <person name="Johnson J."/>
            <person name="Cho J.C."/>
        </authorList>
    </citation>
    <scope>NUCLEOTIDE SEQUENCE [LARGE SCALE GENOMIC DNA]</scope>
    <source>
        <strain>HTCC2594</strain>
    </source>
</reference>
<protein>
    <recommendedName>
        <fullName evidence="1">DNA-directed RNA polymerase subunit omega</fullName>
        <shortName evidence="1">RNAP omega subunit</shortName>
        <ecNumber evidence="1">2.7.7.6</ecNumber>
    </recommendedName>
    <alternativeName>
        <fullName evidence="1">RNA polymerase omega subunit</fullName>
    </alternativeName>
    <alternativeName>
        <fullName evidence="1">Transcriptase subunit omega</fullName>
    </alternativeName>
</protein>